<comment type="function">
    <text evidence="4 5 6 7 8 9">Calmodulin-binding protein that acts as a guanine exchange factor for Rab10 and Rab11 (PubMed:23226104, PubMed:23369713, PubMed:9813038). Essential for maintenance of adult photoreceptor cells (PubMed:23226104). Upon light stimulation, required for trafficking of newly synthesized ninaE (Rh1) from the trans-Golgi network to rhabdomere membranes via Rab11-dependent vesicular transport (PubMed:23226104). During egg development, essential for establishing and maintaining epithelial cell polarity by regulating the correct polarized deposition of basal membrane (BM) proteins in follicular epithelial (FE) cells (PubMed:18331716, PubMed:23369713, PubMed:24828534). Functions by targeting Rab10 to the basal cytoplasm, where it restricts the secretion of BM proteins such as trol/Pcan and vkg/Coll IV to the basal surface (PubMed:18331716, PubMed:23369713, PubMed:24828534). Appears to be involved in regulating the levels and distribution of the guanine nucleotide exchange factor strat, however the two proteins appear to have independent roles in regulating polarized BM protein secretion in the FE (PubMed:28228250).</text>
</comment>
<comment type="subunit">
    <text evidence="4 5 6 9">Interacts with Cam (PubMed:18331716, PubMed:9813038). Interacts with Rab10 (PubMed:23369713). Interacts (via the DENN domains) with Rab11 (PubMed:23226104).</text>
</comment>
<comment type="interaction">
    <interactant intactId="EBI-868608">
        <id>Q9W3D3</id>
    </interactant>
    <interactant intactId="EBI-148897">
        <id>O18335</id>
        <label>Rab11</label>
    </interactant>
    <organismsDiffer>false</organismsDiffer>
    <experiments>2</experiments>
</comment>
<comment type="subcellular location">
    <subcellularLocation>
        <location evidence="4 6">Cytoplasm</location>
        <location evidence="4 6">Cell cortex</location>
    </subcellularLocation>
    <subcellularLocation>
        <location evidence="4">Early endosome</location>
    </subcellularLocation>
    <subcellularLocation>
        <location evidence="4">Recycling endosome</location>
    </subcellularLocation>
    <subcellularLocation>
        <location evidence="5">Cytoplasmic granule</location>
    </subcellularLocation>
    <text evidence="4 5 6">In follicle cells (FC), accumulates at the plasma membrane and in both early and recycling endosomes. In FCs, detected at the lateral and apical cell cortex during early stages of oogenesis. At later stages, mostly expressed at the lateral cortex but some expression is still detected at the apical surface (PubMed:18331716). Colocalizes with Rab10 near the FC basal surface (PubMed:23369713). In photoreceptor cells, colocalizes with Rab11 in punctate structures (PubMed:23226104).</text>
</comment>
<comment type="alternative products">
    <event type="alternative splicing"/>
    <isoform>
        <id>Q9W3D3-1</id>
        <name evidence="10 15">A</name>
        <name evidence="15">D</name>
        <sequence type="displayed"/>
    </isoform>
    <isoform>
        <id>Q9W3D3-2</id>
        <name evidence="10 15">B</name>
        <sequence type="described" ref="VSP_059814 VSP_059815"/>
    </isoform>
</comment>
<comment type="tissue specificity">
    <text evidence="9">Expressed in the adult head and body.</text>
</comment>
<comment type="developmental stage">
    <text evidence="4 9">Expressed in the follicle epithelial cells throughout their development (PubMed:18331716). Not detected until the adult stage (PubMed:9813038).</text>
</comment>
<comment type="sequence caution" evidence="11">
    <conflict type="frameshift">
        <sequence resource="EMBL-CDS" id="CAA76938"/>
    </conflict>
</comment>
<dbReference type="EMBL" id="Y17918">
    <property type="protein sequence ID" value="CAA76938.1"/>
    <property type="status" value="ALT_FRAME"/>
    <property type="molecule type" value="mRNA"/>
</dbReference>
<dbReference type="EMBL" id="AE014298">
    <property type="protein sequence ID" value="AAF46397.3"/>
    <property type="molecule type" value="Genomic_DNA"/>
</dbReference>
<dbReference type="EMBL" id="AE014298">
    <property type="protein sequence ID" value="AAF46398.3"/>
    <property type="molecule type" value="Genomic_DNA"/>
</dbReference>
<dbReference type="EMBL" id="AE014298">
    <property type="protein sequence ID" value="ACZ95245.2"/>
    <property type="molecule type" value="Genomic_DNA"/>
</dbReference>
<dbReference type="EMBL" id="BT031006">
    <property type="protein sequence ID" value="ABV82388.1"/>
    <property type="molecule type" value="mRNA"/>
</dbReference>
<dbReference type="EMBL" id="AY094962">
    <property type="protein sequence ID" value="AAM11315.1"/>
    <property type="molecule type" value="mRNA"/>
</dbReference>
<dbReference type="PIR" id="T13717">
    <property type="entry name" value="T13717"/>
</dbReference>
<dbReference type="RefSeq" id="NP_001162710.2">
    <molecule id="Q9W3D3-1"/>
    <property type="nucleotide sequence ID" value="NM_001169239.2"/>
</dbReference>
<dbReference type="RefSeq" id="NP_525080.3">
    <molecule id="Q9W3D3-1"/>
    <property type="nucleotide sequence ID" value="NM_080341.4"/>
</dbReference>
<dbReference type="RefSeq" id="NP_727281.2">
    <property type="nucleotide sequence ID" value="NM_167164.4"/>
</dbReference>
<dbReference type="SMR" id="Q9W3D3"/>
<dbReference type="DIP" id="DIP-59994N"/>
<dbReference type="FunCoup" id="Q9W3D3">
    <property type="interactions" value="831"/>
</dbReference>
<dbReference type="IntAct" id="Q9W3D3">
    <property type="interactions" value="2"/>
</dbReference>
<dbReference type="STRING" id="7227.FBpp0310013"/>
<dbReference type="GlyGen" id="Q9W3D3">
    <property type="glycosylation" value="1 site"/>
</dbReference>
<dbReference type="PaxDb" id="7227-FBpp0071165"/>
<dbReference type="DNASU" id="31800"/>
<dbReference type="EnsemblMetazoa" id="FBtr0071219">
    <molecule id="Q9W3D3-1"/>
    <property type="protein sequence ID" value="FBpp0071165"/>
    <property type="gene ID" value="FBgn0025864"/>
</dbReference>
<dbReference type="EnsemblMetazoa" id="FBtr0071220">
    <property type="protein sequence ID" value="FBpp0089320"/>
    <property type="gene ID" value="FBgn0025864"/>
</dbReference>
<dbReference type="EnsemblMetazoa" id="FBtr0343356">
    <molecule id="Q9W3D3-1"/>
    <property type="protein sequence ID" value="FBpp0310013"/>
    <property type="gene ID" value="FBgn0025864"/>
</dbReference>
<dbReference type="GeneID" id="31800"/>
<dbReference type="KEGG" id="dme:Dmel_CG12737"/>
<dbReference type="UCSC" id="CG12737-RA">
    <molecule id="Q9W3D3-1"/>
    <property type="organism name" value="d. melanogaster"/>
</dbReference>
<dbReference type="UCSC" id="CG12737-RB">
    <property type="organism name" value="d. melanogaster"/>
</dbReference>
<dbReference type="AGR" id="FB:FBgn0025864"/>
<dbReference type="CTD" id="31800"/>
<dbReference type="FlyBase" id="FBgn0025864">
    <property type="gene designation" value="Crag"/>
</dbReference>
<dbReference type="VEuPathDB" id="VectorBase:FBgn0025864"/>
<dbReference type="eggNOG" id="KOG2127">
    <property type="taxonomic scope" value="Eukaryota"/>
</dbReference>
<dbReference type="GeneTree" id="ENSGT00940000168597"/>
<dbReference type="HOGENOM" id="CLU_003074_0_0_1"/>
<dbReference type="InParanoid" id="Q9W3D3"/>
<dbReference type="OMA" id="ICYRVMM"/>
<dbReference type="OrthoDB" id="75250at2759"/>
<dbReference type="PhylomeDB" id="Q9W3D3"/>
<dbReference type="Reactome" id="R-DME-8876198">
    <property type="pathway name" value="RAB GEFs exchange GTP for GDP on RABs"/>
</dbReference>
<dbReference type="BioGRID-ORCS" id="31800">
    <property type="hits" value="0 hits in 3 CRISPR screens"/>
</dbReference>
<dbReference type="ChiTaRS" id="Crag">
    <property type="organism name" value="fly"/>
</dbReference>
<dbReference type="GenomeRNAi" id="31800"/>
<dbReference type="PRO" id="PR:Q9W3D3"/>
<dbReference type="Proteomes" id="UP000000803">
    <property type="component" value="Chromosome X"/>
</dbReference>
<dbReference type="Bgee" id="FBgn0025864">
    <property type="expression patterns" value="Expressed in enteroblast (Drosophila) in digestive tract and 212 other cell types or tissues"/>
</dbReference>
<dbReference type="ExpressionAtlas" id="Q9W3D3">
    <property type="expression patterns" value="baseline and differential"/>
</dbReference>
<dbReference type="GO" id="GO:0045179">
    <property type="term" value="C:apical cortex"/>
    <property type="evidence" value="ECO:0000314"/>
    <property type="project" value="FlyBase"/>
</dbReference>
<dbReference type="GO" id="GO:0031410">
    <property type="term" value="C:cytoplasmic vesicle"/>
    <property type="evidence" value="ECO:0000314"/>
    <property type="project" value="FlyBase"/>
</dbReference>
<dbReference type="GO" id="GO:0005769">
    <property type="term" value="C:early endosome"/>
    <property type="evidence" value="ECO:0007669"/>
    <property type="project" value="UniProtKB-SubCell"/>
</dbReference>
<dbReference type="GO" id="GO:0097575">
    <property type="term" value="C:lateral cell cortex"/>
    <property type="evidence" value="ECO:0000314"/>
    <property type="project" value="FlyBase"/>
</dbReference>
<dbReference type="GO" id="GO:0005886">
    <property type="term" value="C:plasma membrane"/>
    <property type="evidence" value="ECO:0000314"/>
    <property type="project" value="FlyBase"/>
</dbReference>
<dbReference type="GO" id="GO:0055037">
    <property type="term" value="C:recycling endosome"/>
    <property type="evidence" value="ECO:0000314"/>
    <property type="project" value="FlyBase"/>
</dbReference>
<dbReference type="GO" id="GO:0005516">
    <property type="term" value="F:calmodulin binding"/>
    <property type="evidence" value="ECO:0000314"/>
    <property type="project" value="FlyBase"/>
</dbReference>
<dbReference type="GO" id="GO:0005085">
    <property type="term" value="F:guanyl-nucleotide exchange factor activity"/>
    <property type="evidence" value="ECO:0000314"/>
    <property type="project" value="FlyBase"/>
</dbReference>
<dbReference type="GO" id="GO:0031267">
    <property type="term" value="F:small GTPase binding"/>
    <property type="evidence" value="ECO:0000353"/>
    <property type="project" value="FlyBase"/>
</dbReference>
<dbReference type="GO" id="GO:0045175">
    <property type="term" value="P:basal protein localization"/>
    <property type="evidence" value="ECO:0000315"/>
    <property type="project" value="FlyBase"/>
</dbReference>
<dbReference type="GO" id="GO:0070831">
    <property type="term" value="P:basement membrane assembly"/>
    <property type="evidence" value="ECO:0000315"/>
    <property type="project" value="FlyBase"/>
</dbReference>
<dbReference type="GO" id="GO:0061864">
    <property type="term" value="P:basement membrane constituent secretion"/>
    <property type="evidence" value="ECO:0000315"/>
    <property type="project" value="FlyBase"/>
</dbReference>
<dbReference type="GO" id="GO:0110010">
    <property type="term" value="P:basolateral protein secretion"/>
    <property type="evidence" value="ECO:0000315"/>
    <property type="project" value="FlyBase"/>
</dbReference>
<dbReference type="GO" id="GO:0050829">
    <property type="term" value="P:defense response to Gram-negative bacterium"/>
    <property type="evidence" value="ECO:0007001"/>
    <property type="project" value="FlyBase"/>
</dbReference>
<dbReference type="GO" id="GO:0042998">
    <property type="term" value="P:positive regulation of Golgi to plasma membrane protein transport"/>
    <property type="evidence" value="ECO:0000315"/>
    <property type="project" value="FlyBase"/>
</dbReference>
<dbReference type="GO" id="GO:0045089">
    <property type="term" value="P:positive regulation of innate immune response"/>
    <property type="evidence" value="ECO:0007001"/>
    <property type="project" value="FlyBase"/>
</dbReference>
<dbReference type="GO" id="GO:0110011">
    <property type="term" value="P:regulation of basement membrane organization"/>
    <property type="evidence" value="ECO:0000315"/>
    <property type="project" value="FlyBase"/>
</dbReference>
<dbReference type="GO" id="GO:0032483">
    <property type="term" value="P:regulation of Rab protein signal transduction"/>
    <property type="evidence" value="ECO:0000314"/>
    <property type="project" value="FlyBase"/>
</dbReference>
<dbReference type="FunFam" id="2.100.10.50:FF:000001">
    <property type="entry name" value="DENN domain containing 4C"/>
    <property type="match status" value="1"/>
</dbReference>
<dbReference type="Gene3D" id="2.100.10.50">
    <property type="match status" value="1"/>
</dbReference>
<dbReference type="Gene3D" id="3.40.50.11500">
    <property type="match status" value="1"/>
</dbReference>
<dbReference type="InterPro" id="IPR001194">
    <property type="entry name" value="cDENN_dom"/>
</dbReference>
<dbReference type="InterPro" id="IPR005112">
    <property type="entry name" value="dDENN_dom"/>
</dbReference>
<dbReference type="InterPro" id="IPR043153">
    <property type="entry name" value="DENN_C"/>
</dbReference>
<dbReference type="InterPro" id="IPR051696">
    <property type="entry name" value="DENN_Domain_GEFs"/>
</dbReference>
<dbReference type="InterPro" id="IPR023341">
    <property type="entry name" value="MABP"/>
</dbReference>
<dbReference type="InterPro" id="IPR037516">
    <property type="entry name" value="Tripartite_DENN"/>
</dbReference>
<dbReference type="InterPro" id="IPR005113">
    <property type="entry name" value="uDENN_dom"/>
</dbReference>
<dbReference type="PANTHER" id="PTHR12296">
    <property type="entry name" value="DENN DOMAIN-CONTAINING PROTEIN 4"/>
    <property type="match status" value="1"/>
</dbReference>
<dbReference type="PANTHER" id="PTHR12296:SF30">
    <property type="entry name" value="DENN DOMAIN-CONTAINING PROTEIN CRAG"/>
    <property type="match status" value="1"/>
</dbReference>
<dbReference type="Pfam" id="PF03455">
    <property type="entry name" value="dDENN"/>
    <property type="match status" value="1"/>
</dbReference>
<dbReference type="Pfam" id="PF02141">
    <property type="entry name" value="DENN"/>
    <property type="match status" value="1"/>
</dbReference>
<dbReference type="Pfam" id="PF03456">
    <property type="entry name" value="uDENN"/>
    <property type="match status" value="1"/>
</dbReference>
<dbReference type="SMART" id="SM00801">
    <property type="entry name" value="dDENN"/>
    <property type="match status" value="1"/>
</dbReference>
<dbReference type="SMART" id="SM00799">
    <property type="entry name" value="DENN"/>
    <property type="match status" value="1"/>
</dbReference>
<dbReference type="SMART" id="SM00800">
    <property type="entry name" value="uDENN"/>
    <property type="match status" value="1"/>
</dbReference>
<dbReference type="PROSITE" id="PS50211">
    <property type="entry name" value="DENN"/>
    <property type="match status" value="1"/>
</dbReference>
<dbReference type="PROSITE" id="PS51498">
    <property type="entry name" value="MABP"/>
    <property type="match status" value="1"/>
</dbReference>
<protein>
    <recommendedName>
        <fullName evidence="10">DENN domain-containing protein Crag</fullName>
    </recommendedName>
    <alternativeName>
        <fullName evidence="15">Calmodulin-binding protein related to a Rab3 GDP/GTP exchange protein</fullName>
    </alternativeName>
</protein>
<feature type="chain" id="PRO_0000445077" description="DENN domain-containing protein Crag">
    <location>
        <begin position="1"/>
        <end position="1671"/>
    </location>
</feature>
<feature type="domain" description="MABP" evidence="2">
    <location>
        <begin position="39"/>
        <end position="195"/>
    </location>
</feature>
<feature type="domain" description="uDENN" evidence="1">
    <location>
        <begin position="187"/>
        <end position="364"/>
    </location>
</feature>
<feature type="domain" description="cDENN" evidence="1">
    <location>
        <begin position="385"/>
        <end position="521"/>
    </location>
</feature>
<feature type="domain" description="dDENN" evidence="1">
    <location>
        <begin position="523"/>
        <end position="632"/>
    </location>
</feature>
<feature type="region of interest" description="Disordered" evidence="3">
    <location>
        <begin position="997"/>
        <end position="1160"/>
    </location>
</feature>
<feature type="region of interest" description="Disordered" evidence="3">
    <location>
        <begin position="1245"/>
        <end position="1311"/>
    </location>
</feature>
<feature type="region of interest" description="Disordered" evidence="3">
    <location>
        <begin position="1415"/>
        <end position="1435"/>
    </location>
</feature>
<feature type="compositionally biased region" description="Acidic residues" evidence="3">
    <location>
        <begin position="1011"/>
        <end position="1023"/>
    </location>
</feature>
<feature type="compositionally biased region" description="Acidic residues" evidence="3">
    <location>
        <begin position="1050"/>
        <end position="1061"/>
    </location>
</feature>
<feature type="compositionally biased region" description="Polar residues" evidence="3">
    <location>
        <begin position="1072"/>
        <end position="1089"/>
    </location>
</feature>
<feature type="compositionally biased region" description="Low complexity" evidence="3">
    <location>
        <begin position="1100"/>
        <end position="1119"/>
    </location>
</feature>
<feature type="compositionally biased region" description="Polar residues" evidence="3">
    <location>
        <begin position="1136"/>
        <end position="1147"/>
    </location>
</feature>
<feature type="compositionally biased region" description="Basic residues" evidence="3">
    <location>
        <begin position="1254"/>
        <end position="1277"/>
    </location>
</feature>
<feature type="compositionally biased region" description="Basic and acidic residues" evidence="3">
    <location>
        <begin position="1281"/>
        <end position="1301"/>
    </location>
</feature>
<feature type="splice variant" id="VSP_059814" description="In isoform B." evidence="11">
    <location>
        <begin position="1180"/>
        <end position="1206"/>
    </location>
</feature>
<feature type="splice variant" id="VSP_059815" description="In isoform B.">
    <original>IANGN</original>
    <variation>TANGT</variation>
    <location>
        <begin position="1431"/>
        <end position="1435"/>
    </location>
</feature>
<feature type="mutagenesis site" description="In GG43; larvae lethal." evidence="4">
    <location>
        <begin position="161"/>
        <end position="1671"/>
    </location>
</feature>
<feature type="mutagenesis site" description="In CJ101; larvae lethal. In egg chambers, follicle cells (FC) display abnormal localization of various apical, junctional and basolateral proteins, and loss of epithelial integrity. In follicle epithelium (FE) cells, the basal membrane proteins, trol, Lam and vkg display abnormal localization; accumulating on the apical side of the cell in addition to the normal basal accumulation. Expression of strat in the FE is reduced. In egg chambers, trol also shows abnormal apical localization at the posterior pole. Many FCs appear irregularly shaped at the poles, form multiple layers and are often found in the germline cluster. FCs on the lateral side however, appear normal." evidence="4 7 8">
    <location>
        <begin position="367"/>
        <end position="1671"/>
    </location>
</feature>
<feature type="mutagenesis site" description="In CZ085; larvae lethal." evidence="4">
    <location>
        <begin position="659"/>
        <end position="1671"/>
    </location>
</feature>
<feature type="mutagenesis site" description="Larvae lethal at the L2 stage. In photoreceptor cells, light-induced accumulation of newly synthesized ninaE (Rh1) post-Golgi vesicles leads to a reduction in membrane stack volume, and eventually, photoreceptor cell degeneration. Disruption of photoreceptor cell function is light- and age-dependent." evidence="5">
    <location>
        <begin position="798"/>
        <end position="1671"/>
    </location>
</feature>
<feature type="mutagenesis site" description="Larvae lethal at the L2 stage. Adult flies display subtle defects in ommatidial organization." evidence="5">
    <original>C</original>
    <variation>S</variation>
    <location>
        <position position="1372"/>
    </location>
</feature>
<feature type="sequence conflict" description="In Ref. 1; CAA76938." evidence="11" ref="1">
    <original>LTS</original>
    <variation>VTG</variation>
    <location>
        <begin position="1347"/>
        <end position="1349"/>
    </location>
</feature>
<accession>Q9W3D3</accession>
<accession>O96957</accession>
<accession>Q8T3K8</accession>
<accession>Q9W3D2</accession>
<proteinExistence type="evidence at protein level"/>
<keyword id="KW-0025">Alternative splicing</keyword>
<keyword id="KW-0112">Calmodulin-binding</keyword>
<keyword id="KW-0963">Cytoplasm</keyword>
<keyword id="KW-0967">Endosome</keyword>
<keyword id="KW-0344">Guanine-nucleotide releasing factor</keyword>
<keyword id="KW-1185">Reference proteome</keyword>
<organism evidence="16">
    <name type="scientific">Drosophila melanogaster</name>
    <name type="common">Fruit fly</name>
    <dbReference type="NCBI Taxonomy" id="7227"/>
    <lineage>
        <taxon>Eukaryota</taxon>
        <taxon>Metazoa</taxon>
        <taxon>Ecdysozoa</taxon>
        <taxon>Arthropoda</taxon>
        <taxon>Hexapoda</taxon>
        <taxon>Insecta</taxon>
        <taxon>Pterygota</taxon>
        <taxon>Neoptera</taxon>
        <taxon>Endopterygota</taxon>
        <taxon>Diptera</taxon>
        <taxon>Brachycera</taxon>
        <taxon>Muscomorpha</taxon>
        <taxon>Ephydroidea</taxon>
        <taxon>Drosophilidae</taxon>
        <taxon>Drosophila</taxon>
        <taxon>Sophophora</taxon>
    </lineage>
</organism>
<name>CRAG_DROME</name>
<reference evidence="14" key="1">
    <citation type="journal article" date="1998" name="J. Biol. Chem.">
        <title>Retinal targets for calmodulin include proteins implicated in synaptic transmission.</title>
        <authorList>
            <person name="Xu X.-Z.S."/>
            <person name="Wes P.D."/>
            <person name="Chen H."/>
            <person name="Li H.-S."/>
            <person name="Yu M."/>
            <person name="Morgan S."/>
            <person name="Liu Y."/>
            <person name="Montell C."/>
        </authorList>
    </citation>
    <scope>NUCLEOTIDE SEQUENCE [MRNA] (ISOFORM B)</scope>
    <scope>FUNCTION</scope>
    <scope>TISSUE SPECIFICITY</scope>
    <scope>DEVELOPMENTAL STAGE</scope>
    <source>
        <tissue evidence="14">Retina</tissue>
    </source>
</reference>
<reference evidence="16" key="2">
    <citation type="journal article" date="2000" name="Science">
        <title>The genome sequence of Drosophila melanogaster.</title>
        <authorList>
            <person name="Adams M.D."/>
            <person name="Celniker S.E."/>
            <person name="Holt R.A."/>
            <person name="Evans C.A."/>
            <person name="Gocayne J.D."/>
            <person name="Amanatides P.G."/>
            <person name="Scherer S.E."/>
            <person name="Li P.W."/>
            <person name="Hoskins R.A."/>
            <person name="Galle R.F."/>
            <person name="George R.A."/>
            <person name="Lewis S.E."/>
            <person name="Richards S."/>
            <person name="Ashburner M."/>
            <person name="Henderson S.N."/>
            <person name="Sutton G.G."/>
            <person name="Wortman J.R."/>
            <person name="Yandell M.D."/>
            <person name="Zhang Q."/>
            <person name="Chen L.X."/>
            <person name="Brandon R.C."/>
            <person name="Rogers Y.-H.C."/>
            <person name="Blazej R.G."/>
            <person name="Champe M."/>
            <person name="Pfeiffer B.D."/>
            <person name="Wan K.H."/>
            <person name="Doyle C."/>
            <person name="Baxter E.G."/>
            <person name="Helt G."/>
            <person name="Nelson C.R."/>
            <person name="Miklos G.L.G."/>
            <person name="Abril J.F."/>
            <person name="Agbayani A."/>
            <person name="An H.-J."/>
            <person name="Andrews-Pfannkoch C."/>
            <person name="Baldwin D."/>
            <person name="Ballew R.M."/>
            <person name="Basu A."/>
            <person name="Baxendale J."/>
            <person name="Bayraktaroglu L."/>
            <person name="Beasley E.M."/>
            <person name="Beeson K.Y."/>
            <person name="Benos P.V."/>
            <person name="Berman B.P."/>
            <person name="Bhandari D."/>
            <person name="Bolshakov S."/>
            <person name="Borkova D."/>
            <person name="Botchan M.R."/>
            <person name="Bouck J."/>
            <person name="Brokstein P."/>
            <person name="Brottier P."/>
            <person name="Burtis K.C."/>
            <person name="Busam D.A."/>
            <person name="Butler H."/>
            <person name="Cadieu E."/>
            <person name="Center A."/>
            <person name="Chandra I."/>
            <person name="Cherry J.M."/>
            <person name="Cawley S."/>
            <person name="Dahlke C."/>
            <person name="Davenport L.B."/>
            <person name="Davies P."/>
            <person name="de Pablos B."/>
            <person name="Delcher A."/>
            <person name="Deng Z."/>
            <person name="Mays A.D."/>
            <person name="Dew I."/>
            <person name="Dietz S.M."/>
            <person name="Dodson K."/>
            <person name="Doup L.E."/>
            <person name="Downes M."/>
            <person name="Dugan-Rocha S."/>
            <person name="Dunkov B.C."/>
            <person name="Dunn P."/>
            <person name="Durbin K.J."/>
            <person name="Evangelista C.C."/>
            <person name="Ferraz C."/>
            <person name="Ferriera S."/>
            <person name="Fleischmann W."/>
            <person name="Fosler C."/>
            <person name="Gabrielian A.E."/>
            <person name="Garg N.S."/>
            <person name="Gelbart W.M."/>
            <person name="Glasser K."/>
            <person name="Glodek A."/>
            <person name="Gong F."/>
            <person name="Gorrell J.H."/>
            <person name="Gu Z."/>
            <person name="Guan P."/>
            <person name="Harris M."/>
            <person name="Harris N.L."/>
            <person name="Harvey D.A."/>
            <person name="Heiman T.J."/>
            <person name="Hernandez J.R."/>
            <person name="Houck J."/>
            <person name="Hostin D."/>
            <person name="Houston K.A."/>
            <person name="Howland T.J."/>
            <person name="Wei M.-H."/>
            <person name="Ibegwam C."/>
            <person name="Jalali M."/>
            <person name="Kalush F."/>
            <person name="Karpen G.H."/>
            <person name="Ke Z."/>
            <person name="Kennison J.A."/>
            <person name="Ketchum K.A."/>
            <person name="Kimmel B.E."/>
            <person name="Kodira C.D."/>
            <person name="Kraft C.L."/>
            <person name="Kravitz S."/>
            <person name="Kulp D."/>
            <person name="Lai Z."/>
            <person name="Lasko P."/>
            <person name="Lei Y."/>
            <person name="Levitsky A.A."/>
            <person name="Li J.H."/>
            <person name="Li Z."/>
            <person name="Liang Y."/>
            <person name="Lin X."/>
            <person name="Liu X."/>
            <person name="Mattei B."/>
            <person name="McIntosh T.C."/>
            <person name="McLeod M.P."/>
            <person name="McPherson D."/>
            <person name="Merkulov G."/>
            <person name="Milshina N.V."/>
            <person name="Mobarry C."/>
            <person name="Morris J."/>
            <person name="Moshrefi A."/>
            <person name="Mount S.M."/>
            <person name="Moy M."/>
            <person name="Murphy B."/>
            <person name="Murphy L."/>
            <person name="Muzny D.M."/>
            <person name="Nelson D.L."/>
            <person name="Nelson D.R."/>
            <person name="Nelson K.A."/>
            <person name="Nixon K."/>
            <person name="Nusskern D.R."/>
            <person name="Pacleb J.M."/>
            <person name="Palazzolo M."/>
            <person name="Pittman G.S."/>
            <person name="Pan S."/>
            <person name="Pollard J."/>
            <person name="Puri V."/>
            <person name="Reese M.G."/>
            <person name="Reinert K."/>
            <person name="Remington K."/>
            <person name="Saunders R.D.C."/>
            <person name="Scheeler F."/>
            <person name="Shen H."/>
            <person name="Shue B.C."/>
            <person name="Siden-Kiamos I."/>
            <person name="Simpson M."/>
            <person name="Skupski M.P."/>
            <person name="Smith T.J."/>
            <person name="Spier E."/>
            <person name="Spradling A.C."/>
            <person name="Stapleton M."/>
            <person name="Strong R."/>
            <person name="Sun E."/>
            <person name="Svirskas R."/>
            <person name="Tector C."/>
            <person name="Turner R."/>
            <person name="Venter E."/>
            <person name="Wang A.H."/>
            <person name="Wang X."/>
            <person name="Wang Z.-Y."/>
            <person name="Wassarman D.A."/>
            <person name="Weinstock G.M."/>
            <person name="Weissenbach J."/>
            <person name="Williams S.M."/>
            <person name="Woodage T."/>
            <person name="Worley K.C."/>
            <person name="Wu D."/>
            <person name="Yang S."/>
            <person name="Yao Q.A."/>
            <person name="Ye J."/>
            <person name="Yeh R.-F."/>
            <person name="Zaveri J.S."/>
            <person name="Zhan M."/>
            <person name="Zhang G."/>
            <person name="Zhao Q."/>
            <person name="Zheng L."/>
            <person name="Zheng X.H."/>
            <person name="Zhong F.N."/>
            <person name="Zhong W."/>
            <person name="Zhou X."/>
            <person name="Zhu S.C."/>
            <person name="Zhu X."/>
            <person name="Smith H.O."/>
            <person name="Gibbs R.A."/>
            <person name="Myers E.W."/>
            <person name="Rubin G.M."/>
            <person name="Venter J.C."/>
        </authorList>
    </citation>
    <scope>NUCLEOTIDE SEQUENCE [LARGE SCALE GENOMIC DNA]</scope>
    <source>
        <strain evidence="16">Berkeley</strain>
    </source>
</reference>
<reference evidence="16" key="3">
    <citation type="journal article" date="2002" name="Genome Biol.">
        <title>Annotation of the Drosophila melanogaster euchromatic genome: a systematic review.</title>
        <authorList>
            <person name="Misra S."/>
            <person name="Crosby M.A."/>
            <person name="Mungall C.J."/>
            <person name="Matthews B.B."/>
            <person name="Campbell K.S."/>
            <person name="Hradecky P."/>
            <person name="Huang Y."/>
            <person name="Kaminker J.S."/>
            <person name="Millburn G.H."/>
            <person name="Prochnik S.E."/>
            <person name="Smith C.D."/>
            <person name="Tupy J.L."/>
            <person name="Whitfield E.J."/>
            <person name="Bayraktaroglu L."/>
            <person name="Berman B.P."/>
            <person name="Bettencourt B.R."/>
            <person name="Celniker S.E."/>
            <person name="de Grey A.D.N.J."/>
            <person name="Drysdale R.A."/>
            <person name="Harris N.L."/>
            <person name="Richter J."/>
            <person name="Russo S."/>
            <person name="Schroeder A.J."/>
            <person name="Shu S.Q."/>
            <person name="Stapleton M."/>
            <person name="Yamada C."/>
            <person name="Ashburner M."/>
            <person name="Gelbart W.M."/>
            <person name="Rubin G.M."/>
            <person name="Lewis S.E."/>
        </authorList>
    </citation>
    <scope>GENOME REANNOTATION</scope>
    <source>
        <strain evidence="16">Berkeley</strain>
    </source>
</reference>
<reference evidence="13" key="4">
    <citation type="submission" date="2007-10" db="EMBL/GenBank/DDBJ databases">
        <authorList>
            <person name="Stapleton M."/>
            <person name="Carlson J."/>
            <person name="Frise E."/>
            <person name="Kapadia B."/>
            <person name="Park S."/>
            <person name="Wan K."/>
            <person name="Yu C."/>
            <person name="Celniker S."/>
        </authorList>
    </citation>
    <scope>NUCLEOTIDE SEQUENCE [LARGE SCALE MRNA] (ISOFORM B)</scope>
    <source>
        <strain evidence="13">Berkeley</strain>
    </source>
</reference>
<reference evidence="12" key="5">
    <citation type="journal article" date="2002" name="Genome Biol.">
        <title>A Drosophila full-length cDNA resource.</title>
        <authorList>
            <person name="Stapleton M."/>
            <person name="Carlson J.W."/>
            <person name="Brokstein P."/>
            <person name="Yu C."/>
            <person name="Champe M."/>
            <person name="George R.A."/>
            <person name="Guarin H."/>
            <person name="Kronmiller B."/>
            <person name="Pacleb J.M."/>
            <person name="Park S."/>
            <person name="Wan K.H."/>
            <person name="Rubin G.M."/>
            <person name="Celniker S.E."/>
        </authorList>
    </citation>
    <scope>NUCLEOTIDE SEQUENCE [LARGE SCALE MRNA] OF 386-1644 (ISOFORM B)</scope>
    <source>
        <strain evidence="12">Berkeley</strain>
        <tissue evidence="12">Embryo</tissue>
    </source>
</reference>
<reference evidence="11" key="6">
    <citation type="journal article" date="2008" name="Dev. Cell">
        <title>Crag regulates epithelial architecture and polarized deposition of basement membrane proteins in Drosophila.</title>
        <authorList>
            <person name="Denef N."/>
            <person name="Chen Y."/>
            <person name="Weeks S.D."/>
            <person name="Barcelo G."/>
            <person name="Schuepbach T."/>
        </authorList>
    </citation>
    <scope>FUNCTION</scope>
    <scope>INTERACTION WITH CAM</scope>
    <scope>SUBCELLULAR LOCATION</scope>
    <scope>DEVELOPMENTAL STAGE</scope>
    <scope>MUTAGENESIS OF 161-GLN--PRO-1671; 367-GLN--PRO-1671 AND 659-ARG--PRO-1671</scope>
</reference>
<reference evidence="11" key="7">
    <citation type="journal article" date="2012" name="PLoS Biol.">
        <title>Crag is a GEF for Rab11 required for rhodopsin trafficking and maintenance of adult photoreceptor cells.</title>
        <authorList>
            <person name="Xiong B."/>
            <person name="Bayat V."/>
            <person name="Jaiswal M."/>
            <person name="Zhang K."/>
            <person name="Sandoval H."/>
            <person name="Charng W.L."/>
            <person name="Li T."/>
            <person name="David G."/>
            <person name="Duraine L."/>
            <person name="Lin Y.Q."/>
            <person name="Neely G.G."/>
            <person name="Yamamoto S."/>
            <person name="Bellen H.J."/>
        </authorList>
    </citation>
    <scope>FUNCTION</scope>
    <scope>INTERACTION WITH RAB11</scope>
    <scope>SUBCELLULAR LOCATION</scope>
    <scope>MUTAGENESIS OF 798-ARG--PRO-1671 AND CYS-1372</scope>
</reference>
<reference evidence="11" key="8">
    <citation type="journal article" date="2013" name="Dev. Cell">
        <title>A Rab10-dependent mechanism for polarized basement membrane secretion during organ morphogenesis.</title>
        <authorList>
            <person name="Lerner D.W."/>
            <person name="McCoy D."/>
            <person name="Isabella A.J."/>
            <person name="Mahowald A.P."/>
            <person name="Gerlach G.F."/>
            <person name="Chaudhry T.A."/>
            <person name="Horne-Badovinac S."/>
        </authorList>
    </citation>
    <scope>FUNCTION</scope>
    <scope>INTERACTION WITH RAB10</scope>
    <scope>SUBCELLULAR LOCATION</scope>
</reference>
<reference evidence="11" key="9">
    <citation type="journal article" date="2014" name="Proc. Natl. Acad. Sci. U.S.A.">
        <title>Polarized deposition of basement membrane proteins depends on Phosphatidylinositol synthase and the levels of Phosphatidylinositol 4,5-bisphosphate.</title>
        <authorList>
            <person name="Devergne O."/>
            <person name="Tsung K."/>
            <person name="Barcelo G."/>
            <person name="Schuepbach T."/>
        </authorList>
    </citation>
    <scope>FUNCTION</scope>
    <scope>MUTAGENESIS OF 367-GLN--PRO-1671</scope>
</reference>
<reference evidence="11" key="10">
    <citation type="journal article" date="2017" name="Cell Rep.">
        <title>Stratum, a Homolog of the Human GEF Mss4, Partnered with Rab8, Controls the Basal Restriction of Basement Membrane Proteins in Epithelial Cells.</title>
        <authorList>
            <person name="Devergne O."/>
            <person name="Sun G.H."/>
            <person name="Schuepbach T."/>
        </authorList>
    </citation>
    <scope>FUNCTION</scope>
    <scope>MUTAGENESIS OF 367-GLN--PRO-1671</scope>
</reference>
<gene>
    <name evidence="10 15" type="primary">Crag</name>
    <name evidence="15" type="ORF">CG12737</name>
</gene>
<evidence type="ECO:0000255" key="1">
    <source>
        <dbReference type="PROSITE-ProRule" id="PRU00304"/>
    </source>
</evidence>
<evidence type="ECO:0000255" key="2">
    <source>
        <dbReference type="PROSITE-ProRule" id="PRU00831"/>
    </source>
</evidence>
<evidence type="ECO:0000256" key="3">
    <source>
        <dbReference type="SAM" id="MobiDB-lite"/>
    </source>
</evidence>
<evidence type="ECO:0000269" key="4">
    <source>
    </source>
</evidence>
<evidence type="ECO:0000269" key="5">
    <source>
    </source>
</evidence>
<evidence type="ECO:0000269" key="6">
    <source>
    </source>
</evidence>
<evidence type="ECO:0000269" key="7">
    <source>
    </source>
</evidence>
<evidence type="ECO:0000269" key="8">
    <source>
    </source>
</evidence>
<evidence type="ECO:0000269" key="9">
    <source>
    </source>
</evidence>
<evidence type="ECO:0000303" key="10">
    <source>
    </source>
</evidence>
<evidence type="ECO:0000305" key="11"/>
<evidence type="ECO:0000312" key="12">
    <source>
        <dbReference type="EMBL" id="AAM11315.1"/>
    </source>
</evidence>
<evidence type="ECO:0000312" key="13">
    <source>
        <dbReference type="EMBL" id="ABV82388.1"/>
    </source>
</evidence>
<evidence type="ECO:0000312" key="14">
    <source>
        <dbReference type="EMBL" id="CAA76938.1"/>
    </source>
</evidence>
<evidence type="ECO:0000312" key="15">
    <source>
        <dbReference type="FlyBase" id="FBgn0025864"/>
    </source>
</evidence>
<evidence type="ECO:0000312" key="16">
    <source>
        <dbReference type="Proteomes" id="UP000000803"/>
    </source>
</evidence>
<sequence length="1671" mass="187010">MEEKRIADYFVVAGMPENPQLLQENSFNDSGRLRAATTIEPITDIGVYFPLLGEEVPEGYEILSHTPTGLQANLNHGSVRTTDCYIYFRRGKDRPPLVDIGVLYDGHERIMSDAEIVAETPGGRVANVNNSSAKTFLTYRRARADMPCNELVVTELCVIVQSKGERAPHAFCLIYKTLNKGYVGSDVYLCYKKSMYRPKHISYKPEILLRYPTFDHTDFPLNLCPSVPLFCLPMGASLEAWPHVNGTEKRKPISPVFSTFVLTVSDGTYKVYGSALTFYEDYDESKLSAEQKELLGWDEEFGAQHSLHMIKAICLLSHHPFGDTFDKWLKYLHRMVLYDVNIPIPVERYITQLLDEVPFPAPSIHLQLSSESNDRILLTQPEDSPLPRSGAGFHILLQNLGTDNCLHVLLLALTEQKILIHSLRPATLTAVAEAIVSLLFPFKWQCPYIPLCPLGLAEVLHAPLPYLIGVDSRFFDLYEPPTDVTCIDLDTNNISLCESQRHLSPKLLPKRAARLLRQTLTELENAKPISYDSTNSLDRDIRKRKRELVLEQRIQEAFLLFMASILRGYRDFLVPISKAPSVGATDPSALFQLKAFLRSRDKSHQKFFELMMKTQMFIRFIEERSFVSDGDHGLSFFDECAEKVGNYDETPAQLHLVDWDTGQNSERTKYIFPPDSVTPAGSQPGGGGGGLAYNYENFTLQPELLQSTKKTALSKFLQLQLNASLSPGSPIARRTKHEIKLSQKMASRCQQHPEAWSKYLLATCYSLYFLILPSMVLDPRHAGKEPEILRAAYDVLVRASRLKITCDEFCYRIMMQLCGIHNLPVLAVRLHYLMKRSGVQANALTYGFYNRCVLESQWPQDSTTISQIRWNRIKNVVLGAAQFRKAGKQRAASKVNKSLSASQDQNLSTLETVDGQSRTSLASSSGDGGGHGLLDFAAFDRLRNKLGSIVRQTVTGGNNETMGDAVNNTGLLIPGELSAPNTPTYGGDTEILAKALQQQQPRKQIMSIGGGDDDDEDEDEDEYTAGSPSTPQKQLEAGADDLEYAGGGDYEADEEDEDEVDEHVAAQRARQRVQSPTKISPRTPVTQNDPLGALNEEESAASATPTQETQQEQQHSQSQIDSSIYSDKPILFRGQRSATFDESTQIGKSMHRSETMPVASSGVTNSLANIGSSLKFTFGRYSPARLSLKKDLKLPANIIENISSISPSLTGKKSNELIQGSLSSIKSAANSLTKKFDEIKGVISANSTPTKTNNGHHPHGLHHGHHHPHHHHHHHSQHGNAEQEEHDAAVHEEGKLRRVSSDLDPWGRLSESRKSSYNNLVPLGENSSTGALHMHAFPAVPDNLYSLTSENAADRDCDVLIQLTTCSQCHNCSVLVYDEEIMSGWTAEDSNLNTTCHACNKLTVPFLSVQIERQVEESEQSDPLQDGKEQIANGNSHKTSLTVPYLNPLVLRKELENILTQEGDIALIKPEFVDEHPIIYWNLLWLMERIESKTHLPELCLPVPSDKEHIDPLSKVKTVHIQCLWDNLSLHTEASGPPMYLLYRETQPTSPLIKALLTDQAQLNKNVIQQIISAIRCNDFATPLKRLANERHKLKSNGVERSHSFYRDILFLALTAIGRSNVDLATFHREYAAVFDKLTERECNMYYRNQDLPPSASTIFCRAYFRPLLLP</sequence>